<evidence type="ECO:0000255" key="1">
    <source>
        <dbReference type="PROSITE-ProRule" id="PRU00541"/>
    </source>
</evidence>
<evidence type="ECO:0000256" key="2">
    <source>
        <dbReference type="SAM" id="MobiDB-lite"/>
    </source>
</evidence>
<evidence type="ECO:0000305" key="3"/>
<protein>
    <recommendedName>
        <fullName>Uncharacterized protein Rv2917</fullName>
    </recommendedName>
</protein>
<comment type="similarity">
    <text evidence="3">To M.leprae ML1624.</text>
</comment>
<comment type="sequence caution" evidence="3">
    <conflict type="erroneous initiation">
        <sequence resource="EMBL-CDS" id="CCP45719"/>
    </conflict>
    <text>Extended N-terminus.</text>
</comment>
<sequence length="602" mass="65825">MLHFTAATSRFRLGRERANSVRSDGGWGVLQPVSATFNPPLRGWQRRALVQYLGTQPRDFLAVATPGSGKTSFALRIAAELLRYHTVEQVTVVVPTEHLKVQWAHAAAAHGLSLDPKFANSNPQTSPEYHGVMVTYAQVASHPTLHRVRTEARKTLVVFDEIHHGGDAKTWGDAIREAFGDATRRLALTGTPFRSDDSPIPFVSYQPDADGVLRSQADHTYGYAEALADGVVRPVVFLAYSGQARWRDSAGEEYEARLGEPLSAEQTARAWRTALDPEGEWMPAVITAADRRLRQLRAHVPDAGGMIIASDRTTARAYARLLTTMTAEEPTVVLSDDPGSSARITEFAQGTSRWLVAVRMVSEGVDVPRLSVGVYATNASTPLFFAQAIGRFVRSRRPGETASIFVPSVPNLLQLASALEVQRNHVLGRPHRESAHDPLDGDPATRTQTERGGAERGFTALGADAELDQVIFDGSSFGTATPTGSDEEADYLGIPGLLDAEQMRALLHRRQDEQLRKRAQLQKGATQPATSGASASVHGQLRDLRRELHTLVSIAHHRTGKPHGWIHDERRRRCGGPPIAAATRAQIKARIDALRQLNSERS</sequence>
<name>Y2917_MYCTU</name>
<feature type="chain" id="PRO_0000104102" description="Uncharacterized protein Rv2917">
    <location>
        <begin position="1"/>
        <end position="602"/>
    </location>
</feature>
<feature type="domain" description="Helicase ATP-binding" evidence="1">
    <location>
        <begin position="51"/>
        <end position="210"/>
    </location>
</feature>
<feature type="region of interest" description="Disordered" evidence="2">
    <location>
        <begin position="430"/>
        <end position="452"/>
    </location>
</feature>
<feature type="region of interest" description="Disordered" evidence="2">
    <location>
        <begin position="518"/>
        <end position="538"/>
    </location>
</feature>
<feature type="compositionally biased region" description="Basic and acidic residues" evidence="2">
    <location>
        <begin position="430"/>
        <end position="439"/>
    </location>
</feature>
<feature type="compositionally biased region" description="Polar residues" evidence="2">
    <location>
        <begin position="523"/>
        <end position="534"/>
    </location>
</feature>
<reference key="1">
    <citation type="journal article" date="1998" name="Nature">
        <title>Deciphering the biology of Mycobacterium tuberculosis from the complete genome sequence.</title>
        <authorList>
            <person name="Cole S.T."/>
            <person name="Brosch R."/>
            <person name="Parkhill J."/>
            <person name="Garnier T."/>
            <person name="Churcher C.M."/>
            <person name="Harris D.E."/>
            <person name="Gordon S.V."/>
            <person name="Eiglmeier K."/>
            <person name="Gas S."/>
            <person name="Barry C.E. III"/>
            <person name="Tekaia F."/>
            <person name="Badcock K."/>
            <person name="Basham D."/>
            <person name="Brown D."/>
            <person name="Chillingworth T."/>
            <person name="Connor R."/>
            <person name="Davies R.M."/>
            <person name="Devlin K."/>
            <person name="Feltwell T."/>
            <person name="Gentles S."/>
            <person name="Hamlin N."/>
            <person name="Holroyd S."/>
            <person name="Hornsby T."/>
            <person name="Jagels K."/>
            <person name="Krogh A."/>
            <person name="McLean J."/>
            <person name="Moule S."/>
            <person name="Murphy L.D."/>
            <person name="Oliver S."/>
            <person name="Osborne J."/>
            <person name="Quail M.A."/>
            <person name="Rajandream M.A."/>
            <person name="Rogers J."/>
            <person name="Rutter S."/>
            <person name="Seeger K."/>
            <person name="Skelton S."/>
            <person name="Squares S."/>
            <person name="Squares R."/>
            <person name="Sulston J.E."/>
            <person name="Taylor K."/>
            <person name="Whitehead S."/>
            <person name="Barrell B.G."/>
        </authorList>
    </citation>
    <scope>NUCLEOTIDE SEQUENCE [LARGE SCALE GENOMIC DNA]</scope>
    <source>
        <strain>ATCC 25618 / H37Rv</strain>
    </source>
</reference>
<gene>
    <name type="ordered locus">Rv2917</name>
    <name type="ORF">MTCY338.05</name>
</gene>
<accession>P9WL21</accession>
<accession>L0TCM0</accession>
<accession>Q10966</accession>
<accession>Q10967</accession>
<dbReference type="EMBL" id="AL123456">
    <property type="protein sequence ID" value="CCP45719.1"/>
    <property type="status" value="ALT_INIT"/>
    <property type="molecule type" value="Genomic_DNA"/>
</dbReference>
<dbReference type="PIR" id="E70747">
    <property type="entry name" value="E70747"/>
</dbReference>
<dbReference type="RefSeq" id="NP_217433.1">
    <property type="nucleotide sequence ID" value="NC_000962.3"/>
</dbReference>
<dbReference type="RefSeq" id="WP_009936545.1">
    <property type="nucleotide sequence ID" value="NC_000962.3"/>
</dbReference>
<dbReference type="STRING" id="83332.Rv2917"/>
<dbReference type="PaxDb" id="83332-Rv2917"/>
<dbReference type="DNASU" id="887758"/>
<dbReference type="GeneID" id="887758"/>
<dbReference type="KEGG" id="mtu:Rv2917"/>
<dbReference type="PATRIC" id="fig|83332.12.peg.3251"/>
<dbReference type="TubercuList" id="Rv2917"/>
<dbReference type="eggNOG" id="COG1061">
    <property type="taxonomic scope" value="Bacteria"/>
</dbReference>
<dbReference type="InParanoid" id="P9WL21"/>
<dbReference type="OrthoDB" id="5165890at2"/>
<dbReference type="Proteomes" id="UP000001584">
    <property type="component" value="Chromosome"/>
</dbReference>
<dbReference type="GO" id="GO:0005829">
    <property type="term" value="C:cytosol"/>
    <property type="evidence" value="ECO:0000318"/>
    <property type="project" value="GO_Central"/>
</dbReference>
<dbReference type="GO" id="GO:0005886">
    <property type="term" value="C:plasma membrane"/>
    <property type="evidence" value="ECO:0007005"/>
    <property type="project" value="MTBBASE"/>
</dbReference>
<dbReference type="GO" id="GO:0005524">
    <property type="term" value="F:ATP binding"/>
    <property type="evidence" value="ECO:0007669"/>
    <property type="project" value="InterPro"/>
</dbReference>
<dbReference type="GO" id="GO:0003677">
    <property type="term" value="F:DNA binding"/>
    <property type="evidence" value="ECO:0007669"/>
    <property type="project" value="InterPro"/>
</dbReference>
<dbReference type="GO" id="GO:0016787">
    <property type="term" value="F:hydrolase activity"/>
    <property type="evidence" value="ECO:0007669"/>
    <property type="project" value="InterPro"/>
</dbReference>
<dbReference type="GO" id="GO:0009307">
    <property type="term" value="P:DNA restriction-modification system"/>
    <property type="evidence" value="ECO:0000318"/>
    <property type="project" value="GO_Central"/>
</dbReference>
<dbReference type="CDD" id="cd18785">
    <property type="entry name" value="SF2_C"/>
    <property type="match status" value="1"/>
</dbReference>
<dbReference type="FunFam" id="3.40.50.300:FF:003134">
    <property type="entry name" value="Hypothetical alanine and arginine rich protein"/>
    <property type="match status" value="1"/>
</dbReference>
<dbReference type="Gene3D" id="3.40.50.300">
    <property type="entry name" value="P-loop containing nucleotide triphosphate hydrolases"/>
    <property type="match status" value="2"/>
</dbReference>
<dbReference type="InterPro" id="IPR006935">
    <property type="entry name" value="Helicase/UvrB_N"/>
</dbReference>
<dbReference type="InterPro" id="IPR014001">
    <property type="entry name" value="Helicase_ATP-bd"/>
</dbReference>
<dbReference type="InterPro" id="IPR050742">
    <property type="entry name" value="Helicase_Restrict-Modif_Enz"/>
</dbReference>
<dbReference type="InterPro" id="IPR027417">
    <property type="entry name" value="P-loop_NTPase"/>
</dbReference>
<dbReference type="PANTHER" id="PTHR47396:SF2">
    <property type="entry name" value="HELICASE ATP-BINDING DOMAIN-CONTAINING PROTEIN"/>
    <property type="match status" value="1"/>
</dbReference>
<dbReference type="PANTHER" id="PTHR47396">
    <property type="entry name" value="TYPE I RESTRICTION ENZYME ECOKI R PROTEIN"/>
    <property type="match status" value="1"/>
</dbReference>
<dbReference type="Pfam" id="PF04851">
    <property type="entry name" value="ResIII"/>
    <property type="match status" value="1"/>
</dbReference>
<dbReference type="SMART" id="SM00487">
    <property type="entry name" value="DEXDc"/>
    <property type="match status" value="1"/>
</dbReference>
<dbReference type="SUPFAM" id="SSF52540">
    <property type="entry name" value="P-loop containing nucleoside triphosphate hydrolases"/>
    <property type="match status" value="2"/>
</dbReference>
<dbReference type="PROSITE" id="PS51192">
    <property type="entry name" value="HELICASE_ATP_BIND_1"/>
    <property type="match status" value="1"/>
</dbReference>
<organism>
    <name type="scientific">Mycobacterium tuberculosis (strain ATCC 25618 / H37Rv)</name>
    <dbReference type="NCBI Taxonomy" id="83332"/>
    <lineage>
        <taxon>Bacteria</taxon>
        <taxon>Bacillati</taxon>
        <taxon>Actinomycetota</taxon>
        <taxon>Actinomycetes</taxon>
        <taxon>Mycobacteriales</taxon>
        <taxon>Mycobacteriaceae</taxon>
        <taxon>Mycobacterium</taxon>
        <taxon>Mycobacterium tuberculosis complex</taxon>
    </lineage>
</organism>
<keyword id="KW-1185">Reference proteome</keyword>
<proteinExistence type="predicted"/>